<protein>
    <recommendedName>
        <fullName evidence="1">Small ribosomal subunit protein uS3</fullName>
    </recommendedName>
    <alternativeName>
        <fullName evidence="2">30S ribosomal protein S3</fullName>
    </alternativeName>
</protein>
<dbReference type="EMBL" id="CP001139">
    <property type="protein sequence ID" value="ACH65024.1"/>
    <property type="molecule type" value="Genomic_DNA"/>
</dbReference>
<dbReference type="RefSeq" id="WP_005417236.1">
    <property type="nucleotide sequence ID" value="NC_011184.1"/>
</dbReference>
<dbReference type="SMR" id="B5FG15"/>
<dbReference type="GeneID" id="54162864"/>
<dbReference type="KEGG" id="vfm:VFMJ11_0231"/>
<dbReference type="HOGENOM" id="CLU_058591_0_2_6"/>
<dbReference type="Proteomes" id="UP000001857">
    <property type="component" value="Chromosome I"/>
</dbReference>
<dbReference type="GO" id="GO:0022627">
    <property type="term" value="C:cytosolic small ribosomal subunit"/>
    <property type="evidence" value="ECO:0007669"/>
    <property type="project" value="TreeGrafter"/>
</dbReference>
<dbReference type="GO" id="GO:0003729">
    <property type="term" value="F:mRNA binding"/>
    <property type="evidence" value="ECO:0007669"/>
    <property type="project" value="UniProtKB-UniRule"/>
</dbReference>
<dbReference type="GO" id="GO:0019843">
    <property type="term" value="F:rRNA binding"/>
    <property type="evidence" value="ECO:0007669"/>
    <property type="project" value="UniProtKB-UniRule"/>
</dbReference>
<dbReference type="GO" id="GO:0003735">
    <property type="term" value="F:structural constituent of ribosome"/>
    <property type="evidence" value="ECO:0007669"/>
    <property type="project" value="InterPro"/>
</dbReference>
<dbReference type="GO" id="GO:0006412">
    <property type="term" value="P:translation"/>
    <property type="evidence" value="ECO:0007669"/>
    <property type="project" value="UniProtKB-UniRule"/>
</dbReference>
<dbReference type="CDD" id="cd02412">
    <property type="entry name" value="KH-II_30S_S3"/>
    <property type="match status" value="1"/>
</dbReference>
<dbReference type="FunFam" id="3.30.1140.32:FF:000001">
    <property type="entry name" value="30S ribosomal protein S3"/>
    <property type="match status" value="1"/>
</dbReference>
<dbReference type="FunFam" id="3.30.300.20:FF:000001">
    <property type="entry name" value="30S ribosomal protein S3"/>
    <property type="match status" value="1"/>
</dbReference>
<dbReference type="Gene3D" id="3.30.300.20">
    <property type="match status" value="1"/>
</dbReference>
<dbReference type="Gene3D" id="3.30.1140.32">
    <property type="entry name" value="Ribosomal protein S3, C-terminal domain"/>
    <property type="match status" value="1"/>
</dbReference>
<dbReference type="HAMAP" id="MF_01309_B">
    <property type="entry name" value="Ribosomal_uS3_B"/>
    <property type="match status" value="1"/>
</dbReference>
<dbReference type="InterPro" id="IPR004087">
    <property type="entry name" value="KH_dom"/>
</dbReference>
<dbReference type="InterPro" id="IPR015946">
    <property type="entry name" value="KH_dom-like_a/b"/>
</dbReference>
<dbReference type="InterPro" id="IPR004044">
    <property type="entry name" value="KH_dom_type_2"/>
</dbReference>
<dbReference type="InterPro" id="IPR009019">
    <property type="entry name" value="KH_sf_prok-type"/>
</dbReference>
<dbReference type="InterPro" id="IPR036419">
    <property type="entry name" value="Ribosomal_S3_C_sf"/>
</dbReference>
<dbReference type="InterPro" id="IPR005704">
    <property type="entry name" value="Ribosomal_uS3_bac-typ"/>
</dbReference>
<dbReference type="InterPro" id="IPR001351">
    <property type="entry name" value="Ribosomal_uS3_C"/>
</dbReference>
<dbReference type="InterPro" id="IPR018280">
    <property type="entry name" value="Ribosomal_uS3_CS"/>
</dbReference>
<dbReference type="NCBIfam" id="TIGR01009">
    <property type="entry name" value="rpsC_bact"/>
    <property type="match status" value="1"/>
</dbReference>
<dbReference type="PANTHER" id="PTHR11760">
    <property type="entry name" value="30S/40S RIBOSOMAL PROTEIN S3"/>
    <property type="match status" value="1"/>
</dbReference>
<dbReference type="PANTHER" id="PTHR11760:SF19">
    <property type="entry name" value="SMALL RIBOSOMAL SUBUNIT PROTEIN US3C"/>
    <property type="match status" value="1"/>
</dbReference>
<dbReference type="Pfam" id="PF07650">
    <property type="entry name" value="KH_2"/>
    <property type="match status" value="1"/>
</dbReference>
<dbReference type="Pfam" id="PF00189">
    <property type="entry name" value="Ribosomal_S3_C"/>
    <property type="match status" value="1"/>
</dbReference>
<dbReference type="SMART" id="SM00322">
    <property type="entry name" value="KH"/>
    <property type="match status" value="1"/>
</dbReference>
<dbReference type="SUPFAM" id="SSF54814">
    <property type="entry name" value="Prokaryotic type KH domain (KH-domain type II)"/>
    <property type="match status" value="1"/>
</dbReference>
<dbReference type="SUPFAM" id="SSF54821">
    <property type="entry name" value="Ribosomal protein S3 C-terminal domain"/>
    <property type="match status" value="1"/>
</dbReference>
<dbReference type="PROSITE" id="PS50823">
    <property type="entry name" value="KH_TYPE_2"/>
    <property type="match status" value="1"/>
</dbReference>
<dbReference type="PROSITE" id="PS00548">
    <property type="entry name" value="RIBOSOMAL_S3"/>
    <property type="match status" value="1"/>
</dbReference>
<name>RS3_ALIFM</name>
<organism>
    <name type="scientific">Aliivibrio fischeri (strain MJ11)</name>
    <name type="common">Vibrio fischeri</name>
    <dbReference type="NCBI Taxonomy" id="388396"/>
    <lineage>
        <taxon>Bacteria</taxon>
        <taxon>Pseudomonadati</taxon>
        <taxon>Pseudomonadota</taxon>
        <taxon>Gammaproteobacteria</taxon>
        <taxon>Vibrionales</taxon>
        <taxon>Vibrionaceae</taxon>
        <taxon>Aliivibrio</taxon>
    </lineage>
</organism>
<comment type="function">
    <text evidence="1">Binds the lower part of the 30S subunit head. Binds mRNA in the 70S ribosome, positioning it for translation.</text>
</comment>
<comment type="subunit">
    <text evidence="1">Part of the 30S ribosomal subunit. Forms a tight complex with proteins S10 and S14.</text>
</comment>
<comment type="similarity">
    <text evidence="1">Belongs to the universal ribosomal protein uS3 family.</text>
</comment>
<accession>B5FG15</accession>
<evidence type="ECO:0000255" key="1">
    <source>
        <dbReference type="HAMAP-Rule" id="MF_01309"/>
    </source>
</evidence>
<evidence type="ECO:0000305" key="2"/>
<reference key="1">
    <citation type="submission" date="2008-08" db="EMBL/GenBank/DDBJ databases">
        <title>Complete sequence of Vibrio fischeri strain MJ11.</title>
        <authorList>
            <person name="Mandel M.J."/>
            <person name="Stabb E.V."/>
            <person name="Ruby E.G."/>
            <person name="Ferriera S."/>
            <person name="Johnson J."/>
            <person name="Kravitz S."/>
            <person name="Beeson K."/>
            <person name="Sutton G."/>
            <person name="Rogers Y.-H."/>
            <person name="Friedman R."/>
            <person name="Frazier M."/>
            <person name="Venter J.C."/>
        </authorList>
    </citation>
    <scope>NUCLEOTIDE SEQUENCE [LARGE SCALE GENOMIC DNA]</scope>
    <source>
        <strain>MJ11</strain>
    </source>
</reference>
<proteinExistence type="inferred from homology"/>
<feature type="chain" id="PRO_1000141032" description="Small ribosomal subunit protein uS3">
    <location>
        <begin position="1"/>
        <end position="232"/>
    </location>
</feature>
<feature type="domain" description="KH type-2" evidence="1">
    <location>
        <begin position="39"/>
        <end position="107"/>
    </location>
</feature>
<sequence>MGQKVHPNGIRLGIVKPWNATWFASSQEFADNLDGDFKVRQYLTKELKKASLSRIVIERPAKSIRVTIHTARPGVVIGKKGEDVEKLRAGVAKIAGVPAQINIAEVRKPELDGQLVADSIASQLERRVMFRRAMKRAVQNAMRLGAKGIKVEVSGRLGGAEIARSEWYREGRVPLHTLRADIDYATSSAHTQYGVIGVKVWIFKGEVLGGMPAANAVEPKADKPKKQRRSRK</sequence>
<keyword id="KW-0687">Ribonucleoprotein</keyword>
<keyword id="KW-0689">Ribosomal protein</keyword>
<keyword id="KW-0694">RNA-binding</keyword>
<keyword id="KW-0699">rRNA-binding</keyword>
<gene>
    <name evidence="1" type="primary">rpsC</name>
    <name type="ordered locus">VFMJ11_0231</name>
</gene>